<dbReference type="EMBL" id="AY328089">
    <property type="protein sequence ID" value="AAQ95705.1"/>
    <property type="molecule type" value="Genomic_DNA"/>
</dbReference>
<dbReference type="EMBL" id="AY328090">
    <property type="protein sequence ID" value="AAQ95706.1"/>
    <property type="molecule type" value="mRNA"/>
</dbReference>
<dbReference type="EMBL" id="DS496133">
    <property type="protein sequence ID" value="EDP01566.1"/>
    <property type="molecule type" value="Genomic_DNA"/>
</dbReference>
<dbReference type="EMBL" id="CM008967">
    <property type="protein sequence ID" value="PNW82459.1"/>
    <property type="molecule type" value="Genomic_DNA"/>
</dbReference>
<dbReference type="RefSeq" id="XP_001695308.1">
    <property type="nucleotide sequence ID" value="XM_001695256.1"/>
</dbReference>
<dbReference type="SMR" id="Q68UI8"/>
<dbReference type="STRING" id="3055.Q68UI8"/>
<dbReference type="PaxDb" id="3055-EDP01566"/>
<dbReference type="EnsemblPlants" id="PNW82459">
    <property type="protein sequence ID" value="PNW82459"/>
    <property type="gene ID" value="CHLRE_06g279900v5"/>
</dbReference>
<dbReference type="Gramene" id="PNW82459">
    <property type="protein sequence ID" value="PNW82459"/>
    <property type="gene ID" value="CHLRE_06g279900v5"/>
</dbReference>
<dbReference type="KEGG" id="cre:CHLRE_06g279900v5"/>
<dbReference type="eggNOG" id="ENOG502QRAS">
    <property type="taxonomic scope" value="Eukaryota"/>
</dbReference>
<dbReference type="HOGENOM" id="CLU_452976_0_0_1"/>
<dbReference type="InParanoid" id="Q68UI8"/>
<dbReference type="OMA" id="GREDWRI"/>
<dbReference type="OrthoDB" id="568137at2759"/>
<dbReference type="Proteomes" id="UP000006906">
    <property type="component" value="Chromosome 6"/>
</dbReference>
<dbReference type="GO" id="GO:0036064">
    <property type="term" value="C:ciliary basal body"/>
    <property type="evidence" value="ECO:0000314"/>
    <property type="project" value="UniProtKB"/>
</dbReference>
<dbReference type="GO" id="GO:0005737">
    <property type="term" value="C:cytoplasm"/>
    <property type="evidence" value="ECO:0007669"/>
    <property type="project" value="UniProtKB-KW"/>
</dbReference>
<dbReference type="GO" id="GO:0031514">
    <property type="term" value="C:motile cilium"/>
    <property type="evidence" value="ECO:0000315"/>
    <property type="project" value="UniProtKB"/>
</dbReference>
<dbReference type="GO" id="GO:0008017">
    <property type="term" value="F:microtubule binding"/>
    <property type="evidence" value="ECO:0000315"/>
    <property type="project" value="UniProtKB"/>
</dbReference>
<dbReference type="GO" id="GO:0060271">
    <property type="term" value="P:cilium assembly"/>
    <property type="evidence" value="ECO:0000314"/>
    <property type="project" value="UniProtKB"/>
</dbReference>
<dbReference type="CDD" id="cd22284">
    <property type="entry name" value="HD_CCDC61_N"/>
    <property type="match status" value="1"/>
</dbReference>
<dbReference type="InterPro" id="IPR049733">
    <property type="entry name" value="CCDC61_N"/>
</dbReference>
<dbReference type="PANTHER" id="PTHR22691:SF1">
    <property type="entry name" value="CENTROSOMAL PROTEIN CCDC61"/>
    <property type="match status" value="1"/>
</dbReference>
<dbReference type="PANTHER" id="PTHR22691">
    <property type="entry name" value="YEAST SPT2-RELATED"/>
    <property type="match status" value="1"/>
</dbReference>
<reference key="1">
    <citation type="submission" date="2003-06" db="EMBL/GenBank/DDBJ databases">
        <title>Role of the VFL3 Gene in Segregation and Rotational Positioning of Basal Bodies in Chlamydomonas.</title>
        <authorList>
            <person name="Iyadurai K.B."/>
            <person name="Sislo R.A."/>
            <person name="Silflow C.D."/>
        </authorList>
    </citation>
    <scope>NUCLEOTIDE SEQUENCE [GENOMIC DNA / MRNA]</scope>
    <source>
        <strain>21gr / CC-1690</strain>
    </source>
</reference>
<reference key="2">
    <citation type="journal article" date="2007" name="Science">
        <title>The Chlamydomonas genome reveals the evolution of key animal and plant functions.</title>
        <authorList>
            <person name="Merchant S.S."/>
            <person name="Prochnik S.E."/>
            <person name="Vallon O."/>
            <person name="Harris E.H."/>
            <person name="Karpowicz S.J."/>
            <person name="Witman G.B."/>
            <person name="Terry A."/>
            <person name="Salamov A."/>
            <person name="Fritz-Laylin L.K."/>
            <person name="Marechal-Drouard L."/>
            <person name="Marshall W.F."/>
            <person name="Qu L.H."/>
            <person name="Nelson D.R."/>
            <person name="Sanderfoot A.A."/>
            <person name="Spalding M.H."/>
            <person name="Kapitonov V.V."/>
            <person name="Ren Q."/>
            <person name="Ferris P."/>
            <person name="Lindquist E."/>
            <person name="Shapiro H."/>
            <person name="Lucas S.M."/>
            <person name="Grimwood J."/>
            <person name="Schmutz J."/>
            <person name="Cardol P."/>
            <person name="Cerutti H."/>
            <person name="Chanfreau G."/>
            <person name="Chen C.L."/>
            <person name="Cognat V."/>
            <person name="Croft M.T."/>
            <person name="Dent R."/>
            <person name="Dutcher S."/>
            <person name="Fernandez E."/>
            <person name="Fukuzawa H."/>
            <person name="Gonzalez-Ballester D."/>
            <person name="Gonzalez-Halphen D."/>
            <person name="Hallmann A."/>
            <person name="Hanikenne M."/>
            <person name="Hippler M."/>
            <person name="Inwood W."/>
            <person name="Jabbari K."/>
            <person name="Kalanon M."/>
            <person name="Kuras R."/>
            <person name="Lefebvre P.A."/>
            <person name="Lemaire S.D."/>
            <person name="Lobanov A.V."/>
            <person name="Lohr M."/>
            <person name="Manuell A."/>
            <person name="Meier I."/>
            <person name="Mets L."/>
            <person name="Mittag M."/>
            <person name="Mittelmeier T."/>
            <person name="Moroney J.V."/>
            <person name="Moseley J."/>
            <person name="Napoli C."/>
            <person name="Nedelcu A.M."/>
            <person name="Niyogi K."/>
            <person name="Novoselov S.V."/>
            <person name="Paulsen I.T."/>
            <person name="Pazour G.J."/>
            <person name="Purton S."/>
            <person name="Ral J.P."/>
            <person name="Riano-Pachon D.M."/>
            <person name="Riekhof W."/>
            <person name="Rymarquis L."/>
            <person name="Schroda M."/>
            <person name="Stern D."/>
            <person name="Umen J."/>
            <person name="Willows R."/>
            <person name="Wilson N."/>
            <person name="Zimmer S.L."/>
            <person name="Allmer J."/>
            <person name="Balk J."/>
            <person name="Bisova K."/>
            <person name="Chen C.J."/>
            <person name="Elias M."/>
            <person name="Gendler K."/>
            <person name="Hauser C."/>
            <person name="Lamb M.R."/>
            <person name="Ledford H."/>
            <person name="Long J.C."/>
            <person name="Minagawa J."/>
            <person name="Page M.D."/>
            <person name="Pan J."/>
            <person name="Pootakham W."/>
            <person name="Roje S."/>
            <person name="Rose A."/>
            <person name="Stahlberg E."/>
            <person name="Terauchi A.M."/>
            <person name="Yang P."/>
            <person name="Ball S."/>
            <person name="Bowler C."/>
            <person name="Dieckmann C.L."/>
            <person name="Gladyshev V.N."/>
            <person name="Green P."/>
            <person name="Jorgensen R."/>
            <person name="Mayfield S."/>
            <person name="Mueller-Roeber B."/>
            <person name="Rajamani S."/>
            <person name="Sayre R.T."/>
            <person name="Brokstein P."/>
            <person name="Dubchak I."/>
            <person name="Goodstein D."/>
            <person name="Hornick L."/>
            <person name="Huang Y.W."/>
            <person name="Jhaveri J."/>
            <person name="Luo Y."/>
            <person name="Martinez D."/>
            <person name="Ngau W.C."/>
            <person name="Otillar B."/>
            <person name="Poliakov A."/>
            <person name="Porter A."/>
            <person name="Szajkowski L."/>
            <person name="Werner G."/>
            <person name="Zhou K."/>
            <person name="Grigoriev I.V."/>
            <person name="Rokhsar D.S."/>
            <person name="Grossman A.R."/>
        </authorList>
    </citation>
    <scope>NUCLEOTIDE SEQUENCE [LARGE SCALE GENOMIC DNA]</scope>
    <source>
        <strain>CC-503</strain>
    </source>
</reference>
<reference key="3">
    <citation type="journal article" date="2020" name="Structure">
        <title>CCDC61/VFL3 Is a Paralog of SAS6 and Promotes Ciliary Functions.</title>
        <authorList>
            <person name="Ochi T."/>
            <person name="Quarantotti V."/>
            <person name="Lin H."/>
            <person name="Jullien J."/>
            <person name="Rosa e Silva I."/>
            <person name="Boselli F."/>
            <person name="Barnabas D.D."/>
            <person name="Johnson C.M."/>
            <person name="McLaughlin S.H."/>
            <person name="Freund S.M.V."/>
            <person name="Blackford A.N."/>
            <person name="Kimata Y."/>
            <person name="Goldstein R.E."/>
            <person name="Jackson S.P."/>
            <person name="Blundell T.L."/>
            <person name="Dutcher S.K."/>
            <person name="Gergely F."/>
            <person name="van Breugel M."/>
        </authorList>
    </citation>
    <scope>FUNCTION</scope>
    <scope>SUBCELLULAR LOCATION</scope>
    <scope>DOMAIN</scope>
    <scope>MUTAGENESIS OF 126-PHE-ASP-127; LYS-266; ARG-270; LYS-273; ARG-275 AND ARG-277</scope>
</reference>
<protein>
    <recommendedName>
        <fullName evidence="4">Variable flagella 3</fullName>
    </recommendedName>
    <alternativeName>
        <fullName evidence="4">Coiled-coil domain-containing protein 61</fullName>
    </alternativeName>
</protein>
<sequence length="603" mass="65214">MGDICETVEATFHGVAYLLTVSTIEGETLCVEVEQKSDCSRWRGDFTSRYIEDITAKTGNFKKFPVFVKMLLSALKQASDSVFVDLLTYQDLEVLKSRKAGGQAPPPRTQPPNNKRYLIMTYAAEFDRVHYPLPLLFEENPDPQHLKRIISQLRSEVEGLQVEAGNRRGGEVSAELRRLREENAALQRQLKQMERSGSGVGAGAESSEARELARELRTVRKERDLLQARVEAAEAELERERGLHRRELRRRAKEQQELVDELGRCKEQIRELKMRIRQLTEDLEARDRRMNSTDRIRSVYARGSNDGSTSGVAPRRPSSGGRGPSSNYMAPTRGADSRSNSRGRGTSSAERSRPNSAPIGGPRPRFDPTEYVRQRKERESAAVGGRRSNAPTPPRSAGTSRASSVVGSRPASAERLPPIRTASPTNSRPSSTERYRPGSGGPPGRTSAGGSRGAADRAGARGPDPYAPRSRGASPSGRATAWGEPGASGGGAGGWSKFPGGGGGGVGGSGQRISSNSPRSMSPARALAEVKQKLSTFVAGRGGSLQGDDASSAHGEHMSQSSKSQVFEDATAEIADIDSRLHALQNFLRMAKTSSTSTSTTQA</sequence>
<comment type="function">
    <text evidence="3">Required for normal flagella and striated fiber formation.</text>
</comment>
<comment type="subcellular location">
    <subcellularLocation>
        <location evidence="3">Cytoplasm</location>
        <location evidence="3">Cytoskeleton</location>
        <location evidence="3">Flagellum basal body</location>
    </subcellularLocation>
    <text evidence="3">Localizes to basal bodies and the proximal ends of flagella.</text>
</comment>
<comment type="domain">
    <text evidence="3">The coiled-coil domain is involved in microtubule-binding.</text>
</comment>
<comment type="similarity">
    <text evidence="6">Belongs to the CCDC61 family.</text>
</comment>
<evidence type="ECO:0000255" key="1"/>
<evidence type="ECO:0000256" key="2">
    <source>
        <dbReference type="SAM" id="MobiDB-lite"/>
    </source>
</evidence>
<evidence type="ECO:0000269" key="3">
    <source>
    </source>
</evidence>
<evidence type="ECO:0000303" key="4">
    <source>
    </source>
</evidence>
<evidence type="ECO:0000303" key="5">
    <source ref="1"/>
</evidence>
<evidence type="ECO:0000305" key="6"/>
<name>CCD61_CHLRE</name>
<organism>
    <name type="scientific">Chlamydomonas reinhardtii</name>
    <name type="common">Chlamydomonas smithii</name>
    <dbReference type="NCBI Taxonomy" id="3055"/>
    <lineage>
        <taxon>Eukaryota</taxon>
        <taxon>Viridiplantae</taxon>
        <taxon>Chlorophyta</taxon>
        <taxon>core chlorophytes</taxon>
        <taxon>Chlorophyceae</taxon>
        <taxon>CS clade</taxon>
        <taxon>Chlamydomonadales</taxon>
        <taxon>Chlamydomonadaceae</taxon>
        <taxon>Chlamydomonas</taxon>
    </lineage>
</organism>
<gene>
    <name evidence="5" type="primary">VFL3</name>
    <name evidence="4" type="synonym">CCDC61</name>
</gene>
<keyword id="KW-0966">Cell projection</keyword>
<keyword id="KW-0969">Cilium</keyword>
<keyword id="KW-0175">Coiled coil</keyword>
<keyword id="KW-0963">Cytoplasm</keyword>
<keyword id="KW-0206">Cytoskeleton</keyword>
<keyword id="KW-0282">Flagellum</keyword>
<keyword id="KW-1185">Reference proteome</keyword>
<accession>Q68UI8</accession>
<proteinExistence type="evidence at protein level"/>
<feature type="chain" id="PRO_0000451584" description="Variable flagella 3">
    <location>
        <begin position="1"/>
        <end position="603"/>
    </location>
</feature>
<feature type="region of interest" description="Disordered" evidence="2">
    <location>
        <begin position="288"/>
        <end position="526"/>
    </location>
</feature>
<feature type="region of interest" description="Disordered" evidence="2">
    <location>
        <begin position="539"/>
        <end position="564"/>
    </location>
</feature>
<feature type="coiled-coil region" evidence="1">
    <location>
        <begin position="169"/>
        <end position="289"/>
    </location>
</feature>
<feature type="compositionally biased region" description="Basic and acidic residues" evidence="2">
    <location>
        <begin position="288"/>
        <end position="297"/>
    </location>
</feature>
<feature type="compositionally biased region" description="Low complexity" evidence="2">
    <location>
        <begin position="337"/>
        <end position="348"/>
    </location>
</feature>
<feature type="compositionally biased region" description="Basic and acidic residues" evidence="2">
    <location>
        <begin position="364"/>
        <end position="380"/>
    </location>
</feature>
<feature type="compositionally biased region" description="Polar residues" evidence="2">
    <location>
        <begin position="397"/>
        <end position="406"/>
    </location>
</feature>
<feature type="compositionally biased region" description="Gly residues" evidence="2">
    <location>
        <begin position="486"/>
        <end position="510"/>
    </location>
</feature>
<feature type="compositionally biased region" description="Polar residues" evidence="2">
    <location>
        <begin position="511"/>
        <end position="520"/>
    </location>
</feature>
<feature type="mutagenesis site" description="Partially restores flagella formation in VFL3 mutant strains and does not affect localization at the cilium basal body." evidence="3">
    <original>FD</original>
    <variation>EA</variation>
    <location>
        <begin position="126"/>
        <end position="127"/>
    </location>
</feature>
<feature type="mutagenesis site" description="Does not restore flagella formation in VFL3 mutant strains and does not affect localization at the cilium basal body; when associated with E-270, E-273, E-275 and E-277." evidence="3">
    <original>K</original>
    <variation>E</variation>
    <location>
        <position position="266"/>
    </location>
</feature>
<feature type="mutagenesis site" description="Does not restore flagella formation in VFL3 mutant strains and does not affect localization at the cilium basal body; when associated with E-266, E-273, E-275 and E-277." evidence="3">
    <original>R</original>
    <variation>E</variation>
    <location>
        <position position="270"/>
    </location>
</feature>
<feature type="mutagenesis site" description="Does not restore flagella formation in VFL3 mutant strain and does not affect localization at the cilium basal body; when associated with E-266, E-270, E-275 and E-277." evidence="3">
    <original>K</original>
    <variation>E</variation>
    <location>
        <position position="273"/>
    </location>
</feature>
<feature type="mutagenesis site" description="Does not restore flagella formation in VFL3 mutant strains and does not affect localization at the cilium basal body; when associated with E-266, E-270, E-273 and E-277." evidence="3">
    <original>R</original>
    <variation>E</variation>
    <location>
        <position position="275"/>
    </location>
</feature>
<feature type="mutagenesis site" description="Does not restore flagella formation in VFL3 mutant strains and does not affect localization at the cilium basal body; when associated with E-266, E-270, E-273 and E-275." evidence="3">
    <original>R</original>
    <variation>E</variation>
    <location>
        <position position="277"/>
    </location>
</feature>